<gene>
    <name evidence="1" type="primary">ibpA</name>
    <name type="ordered locus">SF3776</name>
    <name type="ordered locus">S3994</name>
</gene>
<keyword id="KW-0143">Chaperone</keyword>
<keyword id="KW-0963">Cytoplasm</keyword>
<keyword id="KW-1185">Reference proteome</keyword>
<keyword id="KW-0346">Stress response</keyword>
<protein>
    <recommendedName>
        <fullName evidence="1">Small heat shock protein IbpA</fullName>
    </recommendedName>
    <alternativeName>
        <fullName evidence="1">16 kDa heat shock protein A</fullName>
    </alternativeName>
</protein>
<sequence length="137" mass="15774">MRNFDLSPLYRSAIGFDRLFNHLENNQSQSNGGYPPYNVELVDENHYRIAIAVAGFAESELEITAQDNLLVVKGAHADEQKERTYLYQGIAERNFERKFQLAENIHVRGANLVNGLLYIDLERVIPEAKKPRRIEIN</sequence>
<name>IBPA_SHIFL</name>
<accession>P0C057</accession>
<accession>P29209</accession>
<proteinExistence type="inferred from homology"/>
<evidence type="ECO:0000255" key="1">
    <source>
        <dbReference type="HAMAP-Rule" id="MF_02000"/>
    </source>
</evidence>
<evidence type="ECO:0000255" key="2">
    <source>
        <dbReference type="PROSITE-ProRule" id="PRU00285"/>
    </source>
</evidence>
<dbReference type="EMBL" id="AE005674">
    <property type="protein sequence ID" value="AAN45218.2"/>
    <property type="molecule type" value="Genomic_DNA"/>
</dbReference>
<dbReference type="EMBL" id="AE014073">
    <property type="protein sequence ID" value="AAP18979.1"/>
    <property type="molecule type" value="Genomic_DNA"/>
</dbReference>
<dbReference type="RefSeq" id="NP_709511.2">
    <property type="nucleotide sequence ID" value="NC_004337.2"/>
</dbReference>
<dbReference type="RefSeq" id="WP_001243437.1">
    <property type="nucleotide sequence ID" value="NZ_WPGW01000019.1"/>
</dbReference>
<dbReference type="SMR" id="P0C057"/>
<dbReference type="STRING" id="198214.SF3776"/>
<dbReference type="PaxDb" id="198214-SF3776"/>
<dbReference type="GeneID" id="1026089"/>
<dbReference type="GeneID" id="93778428"/>
<dbReference type="KEGG" id="sfl:SF3776"/>
<dbReference type="KEGG" id="sfx:S3994"/>
<dbReference type="PATRIC" id="fig|198214.7.peg.4457"/>
<dbReference type="HOGENOM" id="CLU_046737_4_2_6"/>
<dbReference type="Proteomes" id="UP000001006">
    <property type="component" value="Chromosome"/>
</dbReference>
<dbReference type="Proteomes" id="UP000002673">
    <property type="component" value="Chromosome"/>
</dbReference>
<dbReference type="GO" id="GO:0005737">
    <property type="term" value="C:cytoplasm"/>
    <property type="evidence" value="ECO:0007669"/>
    <property type="project" value="UniProtKB-SubCell"/>
</dbReference>
<dbReference type="GO" id="GO:0050821">
    <property type="term" value="P:protein stabilization"/>
    <property type="evidence" value="ECO:0007669"/>
    <property type="project" value="UniProtKB-UniRule"/>
</dbReference>
<dbReference type="CDD" id="cd06470">
    <property type="entry name" value="ACD_IbpA-B_like"/>
    <property type="match status" value="1"/>
</dbReference>
<dbReference type="FunFam" id="2.60.40.790:FF:000002">
    <property type="entry name" value="Small heat shock protein IbpA"/>
    <property type="match status" value="1"/>
</dbReference>
<dbReference type="Gene3D" id="2.60.40.790">
    <property type="match status" value="1"/>
</dbReference>
<dbReference type="HAMAP" id="MF_02000">
    <property type="entry name" value="HSP20_IbpA"/>
    <property type="match status" value="1"/>
</dbReference>
<dbReference type="InterPro" id="IPR002068">
    <property type="entry name" value="A-crystallin/Hsp20_dom"/>
</dbReference>
<dbReference type="InterPro" id="IPR037913">
    <property type="entry name" value="ACD_IbpA/B"/>
</dbReference>
<dbReference type="InterPro" id="IPR008978">
    <property type="entry name" value="HSP20-like_chaperone"/>
</dbReference>
<dbReference type="InterPro" id="IPR023728">
    <property type="entry name" value="HSP20_IbpA"/>
</dbReference>
<dbReference type="NCBIfam" id="NF008013">
    <property type="entry name" value="PRK10743.1"/>
    <property type="match status" value="1"/>
</dbReference>
<dbReference type="PANTHER" id="PTHR47062">
    <property type="match status" value="1"/>
</dbReference>
<dbReference type="PANTHER" id="PTHR47062:SF1">
    <property type="entry name" value="SMALL HEAT SHOCK PROTEIN IBPA"/>
    <property type="match status" value="1"/>
</dbReference>
<dbReference type="Pfam" id="PF00011">
    <property type="entry name" value="HSP20"/>
    <property type="match status" value="1"/>
</dbReference>
<dbReference type="SUPFAM" id="SSF49764">
    <property type="entry name" value="HSP20-like chaperones"/>
    <property type="match status" value="1"/>
</dbReference>
<dbReference type="PROSITE" id="PS01031">
    <property type="entry name" value="SHSP"/>
    <property type="match status" value="1"/>
</dbReference>
<reference key="1">
    <citation type="journal article" date="2002" name="Nucleic Acids Res.">
        <title>Genome sequence of Shigella flexneri 2a: insights into pathogenicity through comparison with genomes of Escherichia coli K12 and O157.</title>
        <authorList>
            <person name="Jin Q."/>
            <person name="Yuan Z."/>
            <person name="Xu J."/>
            <person name="Wang Y."/>
            <person name="Shen Y."/>
            <person name="Lu W."/>
            <person name="Wang J."/>
            <person name="Liu H."/>
            <person name="Yang J."/>
            <person name="Yang F."/>
            <person name="Zhang X."/>
            <person name="Zhang J."/>
            <person name="Yang G."/>
            <person name="Wu H."/>
            <person name="Qu D."/>
            <person name="Dong J."/>
            <person name="Sun L."/>
            <person name="Xue Y."/>
            <person name="Zhao A."/>
            <person name="Gao Y."/>
            <person name="Zhu J."/>
            <person name="Kan B."/>
            <person name="Ding K."/>
            <person name="Chen S."/>
            <person name="Cheng H."/>
            <person name="Yao Z."/>
            <person name="He B."/>
            <person name="Chen R."/>
            <person name="Ma D."/>
            <person name="Qiang B."/>
            <person name="Wen Y."/>
            <person name="Hou Y."/>
            <person name="Yu J."/>
        </authorList>
    </citation>
    <scope>NUCLEOTIDE SEQUENCE [LARGE SCALE GENOMIC DNA]</scope>
    <source>
        <strain>301 / Serotype 2a</strain>
    </source>
</reference>
<reference key="2">
    <citation type="journal article" date="2003" name="Infect. Immun.">
        <title>Complete genome sequence and comparative genomics of Shigella flexneri serotype 2a strain 2457T.</title>
        <authorList>
            <person name="Wei J."/>
            <person name="Goldberg M.B."/>
            <person name="Burland V."/>
            <person name="Venkatesan M.M."/>
            <person name="Deng W."/>
            <person name="Fournier G."/>
            <person name="Mayhew G.F."/>
            <person name="Plunkett G. III"/>
            <person name="Rose D.J."/>
            <person name="Darling A."/>
            <person name="Mau B."/>
            <person name="Perna N.T."/>
            <person name="Payne S.M."/>
            <person name="Runyen-Janecky L.J."/>
            <person name="Zhou S."/>
            <person name="Schwartz D.C."/>
            <person name="Blattner F.R."/>
        </authorList>
    </citation>
    <scope>NUCLEOTIDE SEQUENCE [LARGE SCALE GENOMIC DNA]</scope>
    <source>
        <strain>ATCC 700930 / 2457T / Serotype 2a</strain>
    </source>
</reference>
<comment type="function">
    <text evidence="1">Associates with aggregated proteins, together with IbpB, to stabilize and protect them from irreversible denaturation and extensive proteolysis during heat shock and oxidative stress. Aggregated proteins bound to the IbpAB complex are more efficiently refolded and reactivated by the ATP-dependent chaperone systems ClpB and DnaK/DnaJ/GrpE. Its activity is ATP-independent.</text>
</comment>
<comment type="subunit">
    <text evidence="1">Monomer. Forms homomultimers of about 100-150 subunits at optimal growth temperatures. Conformation changes to monomers at high temperatures or high ionic concentrations.</text>
</comment>
<comment type="subcellular location">
    <subcellularLocation>
        <location evidence="1">Cytoplasm</location>
    </subcellularLocation>
</comment>
<comment type="similarity">
    <text evidence="1 2">Belongs to the small heat shock protein (HSP20) family.</text>
</comment>
<feature type="chain" id="PRO_0000126025" description="Small heat shock protein IbpA">
    <location>
        <begin position="1"/>
        <end position="137"/>
    </location>
</feature>
<feature type="domain" description="sHSP" evidence="2">
    <location>
        <begin position="28"/>
        <end position="137"/>
    </location>
</feature>
<organism>
    <name type="scientific">Shigella flexneri</name>
    <dbReference type="NCBI Taxonomy" id="623"/>
    <lineage>
        <taxon>Bacteria</taxon>
        <taxon>Pseudomonadati</taxon>
        <taxon>Pseudomonadota</taxon>
        <taxon>Gammaproteobacteria</taxon>
        <taxon>Enterobacterales</taxon>
        <taxon>Enterobacteriaceae</taxon>
        <taxon>Shigella</taxon>
    </lineage>
</organism>